<feature type="chain" id="PRO_0000319570" description="Large ribosomal subunit protein eL38">
    <location>
        <begin position="1"/>
        <end position="70"/>
    </location>
</feature>
<evidence type="ECO:0000305" key="1"/>
<comment type="similarity">
    <text evidence="1">Belongs to the eukaryotic ribosomal protein eL38 family.</text>
</comment>
<reference key="1">
    <citation type="submission" date="2001-09" db="EMBL/GenBank/DDBJ databases">
        <title>The primary structure of amphioxus ribosomal protein L38.</title>
        <authorList>
            <person name="Chen Z."/>
            <person name="Zhang Y."/>
            <person name="Yang H."/>
            <person name="Zhang H."/>
            <person name="Li L."/>
            <person name="Han H."/>
            <person name="Yang H."/>
        </authorList>
    </citation>
    <scope>NUCLEOTIDE SEQUENCE [MRNA]</scope>
</reference>
<organism>
    <name type="scientific">Branchiostoma belcheri</name>
    <name type="common">Amphioxus</name>
    <dbReference type="NCBI Taxonomy" id="7741"/>
    <lineage>
        <taxon>Eukaryota</taxon>
        <taxon>Metazoa</taxon>
        <taxon>Chordata</taxon>
        <taxon>Cephalochordata</taxon>
        <taxon>Leptocardii</taxon>
        <taxon>Amphioxiformes</taxon>
        <taxon>Branchiostomatidae</taxon>
        <taxon>Branchiostoma</taxon>
    </lineage>
</organism>
<proteinExistence type="inferred from homology"/>
<accession>Q95V84</accession>
<keyword id="KW-1185">Reference proteome</keyword>
<keyword id="KW-0687">Ribonucleoprotein</keyword>
<keyword id="KW-0689">Ribosomal protein</keyword>
<dbReference type="EMBL" id="AF420433">
    <property type="protein sequence ID" value="AAL09708.1"/>
    <property type="molecule type" value="mRNA"/>
</dbReference>
<dbReference type="SMR" id="Q95V84"/>
<dbReference type="Proteomes" id="UP000515135">
    <property type="component" value="Unplaced"/>
</dbReference>
<dbReference type="GO" id="GO:0022625">
    <property type="term" value="C:cytosolic large ribosomal subunit"/>
    <property type="evidence" value="ECO:0007669"/>
    <property type="project" value="TreeGrafter"/>
</dbReference>
<dbReference type="GO" id="GO:0003735">
    <property type="term" value="F:structural constituent of ribosome"/>
    <property type="evidence" value="ECO:0007669"/>
    <property type="project" value="InterPro"/>
</dbReference>
<dbReference type="GO" id="GO:0022618">
    <property type="term" value="P:protein-RNA complex assembly"/>
    <property type="evidence" value="ECO:0007669"/>
    <property type="project" value="TreeGrafter"/>
</dbReference>
<dbReference type="GO" id="GO:0006412">
    <property type="term" value="P:translation"/>
    <property type="evidence" value="ECO:0007669"/>
    <property type="project" value="InterPro"/>
</dbReference>
<dbReference type="FunFam" id="3.30.720.90:FF:000001">
    <property type="entry name" value="60S ribosomal protein L38"/>
    <property type="match status" value="1"/>
</dbReference>
<dbReference type="Gene3D" id="3.30.720.90">
    <property type="match status" value="1"/>
</dbReference>
<dbReference type="InterPro" id="IPR002675">
    <property type="entry name" value="Ribosomal_eL38"/>
</dbReference>
<dbReference type="InterPro" id="IPR038464">
    <property type="entry name" value="Ribosomal_eL38_sf"/>
</dbReference>
<dbReference type="PANTHER" id="PTHR10965">
    <property type="entry name" value="60S RIBOSOMAL PROTEIN L38"/>
    <property type="match status" value="1"/>
</dbReference>
<dbReference type="PANTHER" id="PTHR10965:SF0">
    <property type="entry name" value="LARGE RIBOSOMAL SUBUNIT PROTEIN EL38"/>
    <property type="match status" value="1"/>
</dbReference>
<dbReference type="Pfam" id="PF01781">
    <property type="entry name" value="Ribosomal_L38e"/>
    <property type="match status" value="1"/>
</dbReference>
<protein>
    <recommendedName>
        <fullName evidence="1">Large ribosomal subunit protein eL38</fullName>
    </recommendedName>
    <alternativeName>
        <fullName>60S ribosomal protein L38</fullName>
    </alternativeName>
</protein>
<gene>
    <name type="primary">RPL38</name>
</gene>
<name>RL38_BRABE</name>
<sequence length="70" mass="8184">MPKQIHEIKDFLLTARRKDAKSVKIKKNKDNVKFKVRCSRYLYTLVITDKEKADKLKQSLPPGLAVKELK</sequence>